<comment type="similarity">
    <text evidence="1">Belongs to the UPF0342 family.</text>
</comment>
<organism>
    <name type="scientific">Streptococcus pyogenes serotype M49 (strain NZ131)</name>
    <dbReference type="NCBI Taxonomy" id="471876"/>
    <lineage>
        <taxon>Bacteria</taxon>
        <taxon>Bacillati</taxon>
        <taxon>Bacillota</taxon>
        <taxon>Bacilli</taxon>
        <taxon>Lactobacillales</taxon>
        <taxon>Streptococcaceae</taxon>
        <taxon>Streptococcus</taxon>
    </lineage>
</organism>
<proteinExistence type="inferred from homology"/>
<feature type="chain" id="PRO_1000198532" description="UPF0342 protein Spy49_0636">
    <location>
        <begin position="1"/>
        <end position="113"/>
    </location>
</feature>
<sequence>MSQEIYDYANQLERAVRALPEYQKVLEVKEAIQADASASELFDEFVAMQEKIQGMMQSGQMPTAEEQTSIQELSQKIEANDQLKAYFEAQQALSVYMSDIERIVFAPLKDLVK</sequence>
<evidence type="ECO:0000255" key="1">
    <source>
        <dbReference type="HAMAP-Rule" id="MF_01526"/>
    </source>
</evidence>
<accession>B5XKU5</accession>
<dbReference type="EMBL" id="CP000829">
    <property type="protein sequence ID" value="ACI60957.1"/>
    <property type="molecule type" value="Genomic_DNA"/>
</dbReference>
<dbReference type="SMR" id="B5XKU5"/>
<dbReference type="KEGG" id="soz:Spy49_0636"/>
<dbReference type="HOGENOM" id="CLU_140243_2_0_9"/>
<dbReference type="Proteomes" id="UP000001039">
    <property type="component" value="Chromosome"/>
</dbReference>
<dbReference type="Gene3D" id="1.20.1500.10">
    <property type="entry name" value="YheA/YmcA-like"/>
    <property type="match status" value="1"/>
</dbReference>
<dbReference type="HAMAP" id="MF_01526">
    <property type="entry name" value="UPF0342"/>
    <property type="match status" value="1"/>
</dbReference>
<dbReference type="InterPro" id="IPR010368">
    <property type="entry name" value="Com_YlbF"/>
</dbReference>
<dbReference type="InterPro" id="IPR023378">
    <property type="entry name" value="YheA/YmcA-like_dom_sf"/>
</dbReference>
<dbReference type="NCBIfam" id="NF010209">
    <property type="entry name" value="PRK13676.1-1"/>
    <property type="match status" value="1"/>
</dbReference>
<dbReference type="Pfam" id="PF06133">
    <property type="entry name" value="Com_YlbF"/>
    <property type="match status" value="1"/>
</dbReference>
<dbReference type="SUPFAM" id="SSF158622">
    <property type="entry name" value="YheA/YmcA-like"/>
    <property type="match status" value="1"/>
</dbReference>
<reference key="1">
    <citation type="journal article" date="2008" name="J. Bacteriol.">
        <title>Genome sequence of a nephritogenic and highly transformable M49 strain of Streptococcus pyogenes.</title>
        <authorList>
            <person name="McShan W.M."/>
            <person name="Ferretti J.J."/>
            <person name="Karasawa T."/>
            <person name="Suvorov A.N."/>
            <person name="Lin S."/>
            <person name="Qin B."/>
            <person name="Jia H."/>
            <person name="Kenton S."/>
            <person name="Najar F."/>
            <person name="Wu H."/>
            <person name="Scott J."/>
            <person name="Roe B.A."/>
            <person name="Savic D.J."/>
        </authorList>
    </citation>
    <scope>NUCLEOTIDE SEQUENCE [LARGE SCALE GENOMIC DNA]</scope>
    <source>
        <strain>NZ131</strain>
    </source>
</reference>
<gene>
    <name type="ordered locus">Spy49_0636</name>
</gene>
<protein>
    <recommendedName>
        <fullName evidence="1">UPF0342 protein Spy49_0636</fullName>
    </recommendedName>
</protein>
<name>Y636_STRPZ</name>